<reference evidence="15" key="1">
    <citation type="journal article" date="2001" name="Cytogenet. Cell Genet.">
        <title>cDNA cloning, expression studies and chromosome mapping of human type I serine/threonine kinase receptor ALK7 (ACVR1C).</title>
        <authorList>
            <person name="Bondestam J."/>
            <person name="Huotari M.-A."/>
            <person name="Moren A."/>
            <person name="Ustinov J."/>
            <person name="Kaivo-Oja N."/>
            <person name="Kallio J."/>
            <person name="Horelli-Kuitunen N."/>
            <person name="Aaltonen J."/>
            <person name="Fujii M."/>
            <person name="Moustakas A."/>
            <person name="Ten Dijke P."/>
            <person name="Otonkoski T."/>
            <person name="Ritvos O."/>
        </authorList>
    </citation>
    <scope>NUCLEOTIDE SEQUENCE [MRNA]</scope>
    <scope>FUNCTION</scope>
    <scope>TISSUE SPECIFICITY</scope>
    <scope>MUTAGENESIS OF LYS-222</scope>
    <source>
        <tissue evidence="9">Brain</tissue>
    </source>
</reference>
<reference evidence="15 18" key="2">
    <citation type="journal article" date="2003" name="Biol. Reprod.">
        <title>Identification of novel isoforms of activin receptor-like kinase 7 (ALK7) generated by alternative splicing and expression of ALK7 and its ligand, Nodal, in human placenta.</title>
        <authorList>
            <person name="Roberts H.J."/>
            <person name="Hu S."/>
            <person name="Qiu Q."/>
            <person name="Leung P.C.K."/>
            <person name="Caniggia I."/>
            <person name="Gruslin A."/>
            <person name="Tsang B."/>
            <person name="Peng C."/>
        </authorList>
    </citation>
    <scope>NUCLEOTIDE SEQUENCE [MRNA] (ISOFORMS 1; 2; 3 AND 4)</scope>
    <scope>SUBCELLULAR LOCATION</scope>
    <scope>TISSUE SPECIFICITY</scope>
    <source>
        <tissue evidence="17">Placenta</tissue>
    </source>
</reference>
<reference evidence="15 19" key="3">
    <citation type="journal article" date="2005" name="Nature">
        <title>Generation and annotation of the DNA sequences of human chromosomes 2 and 4.</title>
        <authorList>
            <person name="Hillier L.W."/>
            <person name="Graves T.A."/>
            <person name="Fulton R.S."/>
            <person name="Fulton L.A."/>
            <person name="Pepin K.H."/>
            <person name="Minx P."/>
            <person name="Wagner-McPherson C."/>
            <person name="Layman D."/>
            <person name="Wylie K."/>
            <person name="Sekhon M."/>
            <person name="Becker M.C."/>
            <person name="Fewell G.A."/>
            <person name="Delehaunty K.D."/>
            <person name="Miner T.L."/>
            <person name="Nash W.E."/>
            <person name="Kremitzki C."/>
            <person name="Oddy L."/>
            <person name="Du H."/>
            <person name="Sun H."/>
            <person name="Bradshaw-Cordum H."/>
            <person name="Ali J."/>
            <person name="Carter J."/>
            <person name="Cordes M."/>
            <person name="Harris A."/>
            <person name="Isak A."/>
            <person name="van Brunt A."/>
            <person name="Nguyen C."/>
            <person name="Du F."/>
            <person name="Courtney L."/>
            <person name="Kalicki J."/>
            <person name="Ozersky P."/>
            <person name="Abbott S."/>
            <person name="Armstrong J."/>
            <person name="Belter E.A."/>
            <person name="Caruso L."/>
            <person name="Cedroni M."/>
            <person name="Cotton M."/>
            <person name="Davidson T."/>
            <person name="Desai A."/>
            <person name="Elliott G."/>
            <person name="Erb T."/>
            <person name="Fronick C."/>
            <person name="Gaige T."/>
            <person name="Haakenson W."/>
            <person name="Haglund K."/>
            <person name="Holmes A."/>
            <person name="Harkins R."/>
            <person name="Kim K."/>
            <person name="Kruchowski S.S."/>
            <person name="Strong C.M."/>
            <person name="Grewal N."/>
            <person name="Goyea E."/>
            <person name="Hou S."/>
            <person name="Levy A."/>
            <person name="Martinka S."/>
            <person name="Mead K."/>
            <person name="McLellan M.D."/>
            <person name="Meyer R."/>
            <person name="Randall-Maher J."/>
            <person name="Tomlinson C."/>
            <person name="Dauphin-Kohlberg S."/>
            <person name="Kozlowicz-Reilly A."/>
            <person name="Shah N."/>
            <person name="Swearengen-Shahid S."/>
            <person name="Snider J."/>
            <person name="Strong J.T."/>
            <person name="Thompson J."/>
            <person name="Yoakum M."/>
            <person name="Leonard S."/>
            <person name="Pearman C."/>
            <person name="Trani L."/>
            <person name="Radionenko M."/>
            <person name="Waligorski J.E."/>
            <person name="Wang C."/>
            <person name="Rock S.M."/>
            <person name="Tin-Wollam A.-M."/>
            <person name="Maupin R."/>
            <person name="Latreille P."/>
            <person name="Wendl M.C."/>
            <person name="Yang S.-P."/>
            <person name="Pohl C."/>
            <person name="Wallis J.W."/>
            <person name="Spieth J."/>
            <person name="Bieri T.A."/>
            <person name="Berkowicz N."/>
            <person name="Nelson J.O."/>
            <person name="Osborne J."/>
            <person name="Ding L."/>
            <person name="Meyer R."/>
            <person name="Sabo A."/>
            <person name="Shotland Y."/>
            <person name="Sinha P."/>
            <person name="Wohldmann P.E."/>
            <person name="Cook L.L."/>
            <person name="Hickenbotham M.T."/>
            <person name="Eldred J."/>
            <person name="Williams D."/>
            <person name="Jones T.A."/>
            <person name="She X."/>
            <person name="Ciccarelli F.D."/>
            <person name="Izaurralde E."/>
            <person name="Taylor J."/>
            <person name="Schmutz J."/>
            <person name="Myers R.M."/>
            <person name="Cox D.R."/>
            <person name="Huang X."/>
            <person name="McPherson J.D."/>
            <person name="Mardis E.R."/>
            <person name="Clifton S.W."/>
            <person name="Warren W.C."/>
            <person name="Chinwalla A.T."/>
            <person name="Eddy S.R."/>
            <person name="Marra M.A."/>
            <person name="Ovcharenko I."/>
            <person name="Furey T.S."/>
            <person name="Miller W."/>
            <person name="Eichler E.E."/>
            <person name="Bork P."/>
            <person name="Suyama M."/>
            <person name="Torrents D."/>
            <person name="Waterston R.H."/>
            <person name="Wilson R.K."/>
        </authorList>
    </citation>
    <scope>NUCLEOTIDE SEQUENCE [LARGE SCALE GENOMIC DNA]</scope>
</reference>
<reference evidence="15 16" key="4">
    <citation type="journal article" date="2004" name="Genome Res.">
        <title>The status, quality, and expansion of the NIH full-length cDNA project: the Mammalian Gene Collection (MGC).</title>
        <authorList>
            <consortium name="The MGC Project Team"/>
        </authorList>
    </citation>
    <scope>NUCLEOTIDE SEQUENCE [LARGE SCALE MRNA] (ISOFORM 1)</scope>
    <source>
        <tissue evidence="16">Brain</tissue>
    </source>
</reference>
<reference evidence="15" key="5">
    <citation type="journal article" date="2004" name="J. Clin. Endocrinol. Metab.">
        <title>Nodal induces apoptosis and inhibits proliferation in human epithelial ovarian cancer cells via activin receptor-like kinase 7.</title>
        <authorList>
            <person name="Xu G."/>
            <person name="Zhong Y."/>
            <person name="Munir S."/>
            <person name="Yang B.B."/>
            <person name="Tsang B.K."/>
            <person name="Peng C."/>
        </authorList>
    </citation>
    <scope>FUNCTION</scope>
    <scope>MUTAGENESIS OF THR-194 AND LYS-222</scope>
</reference>
<reference key="6">
    <citation type="journal article" date="2004" name="J. Biol. Chem.">
        <title>Nodal and ALK7 inhibit proliferation and induce apoptosis in human trophoblast cells.</title>
        <authorList>
            <person name="Munir S."/>
            <person name="Xu G."/>
            <person name="Wu Y."/>
            <person name="Yang B."/>
            <person name="Lala P.K."/>
            <person name="Peng C."/>
        </authorList>
    </citation>
    <scope>FUNCTION</scope>
    <scope>MUTAGENESIS OF LYS-222</scope>
</reference>
<reference key="7">
    <citation type="journal article" date="2007" name="Nature">
        <title>Patterns of somatic mutation in human cancer genomes.</title>
        <authorList>
            <person name="Greenman C."/>
            <person name="Stephens P."/>
            <person name="Smith R."/>
            <person name="Dalgliesh G.L."/>
            <person name="Hunter C."/>
            <person name="Bignell G."/>
            <person name="Davies H."/>
            <person name="Teague J."/>
            <person name="Butler A."/>
            <person name="Stevens C."/>
            <person name="Edkins S."/>
            <person name="O'Meara S."/>
            <person name="Vastrik I."/>
            <person name="Schmidt E.E."/>
            <person name="Avis T."/>
            <person name="Barthorpe S."/>
            <person name="Bhamra G."/>
            <person name="Buck G."/>
            <person name="Choudhury B."/>
            <person name="Clements J."/>
            <person name="Cole J."/>
            <person name="Dicks E."/>
            <person name="Forbes S."/>
            <person name="Gray K."/>
            <person name="Halliday K."/>
            <person name="Harrison R."/>
            <person name="Hills K."/>
            <person name="Hinton J."/>
            <person name="Jenkinson A."/>
            <person name="Jones D."/>
            <person name="Menzies A."/>
            <person name="Mironenko T."/>
            <person name="Perry J."/>
            <person name="Raine K."/>
            <person name="Richardson D."/>
            <person name="Shepherd R."/>
            <person name="Small A."/>
            <person name="Tofts C."/>
            <person name="Varian J."/>
            <person name="Webb T."/>
            <person name="West S."/>
            <person name="Widaa S."/>
            <person name="Yates A."/>
            <person name="Cahill D.P."/>
            <person name="Louis D.N."/>
            <person name="Goldstraw P."/>
            <person name="Nicholson A.G."/>
            <person name="Brasseur F."/>
            <person name="Looijenga L."/>
            <person name="Weber B.L."/>
            <person name="Chiew Y.-E."/>
            <person name="DeFazio A."/>
            <person name="Greaves M.F."/>
            <person name="Green A.R."/>
            <person name="Campbell P."/>
            <person name="Birney E."/>
            <person name="Easton D.F."/>
            <person name="Chenevix-Trench G."/>
            <person name="Tan M.-H."/>
            <person name="Khoo S.K."/>
            <person name="Teh B.T."/>
            <person name="Yuen S.T."/>
            <person name="Leung S.Y."/>
            <person name="Wooster R."/>
            <person name="Futreal P.A."/>
            <person name="Stratton M.R."/>
        </authorList>
    </citation>
    <scope>VARIANTS [LARGE SCALE ANALYSIS] THR-195; ARG-216; ARG-267; VAL-355 AND VAL-482</scope>
</reference>
<accession>Q8NER5</accession>
<accession>Q4ZFZ8</accession>
<accession>Q86UL1</accession>
<accession>Q86UL2</accession>
<accession>Q8TBG2</accession>
<organism>
    <name type="scientific">Homo sapiens</name>
    <name type="common">Human</name>
    <dbReference type="NCBI Taxonomy" id="9606"/>
    <lineage>
        <taxon>Eukaryota</taxon>
        <taxon>Metazoa</taxon>
        <taxon>Chordata</taxon>
        <taxon>Craniata</taxon>
        <taxon>Vertebrata</taxon>
        <taxon>Euteleostomi</taxon>
        <taxon>Mammalia</taxon>
        <taxon>Eutheria</taxon>
        <taxon>Euarchontoglires</taxon>
        <taxon>Primates</taxon>
        <taxon>Haplorrhini</taxon>
        <taxon>Catarrhini</taxon>
        <taxon>Hominidae</taxon>
        <taxon>Homo</taxon>
    </lineage>
</organism>
<evidence type="ECO:0000250" key="1"/>
<evidence type="ECO:0000250" key="2">
    <source>
        <dbReference type="UniProtKB" id="P70539"/>
    </source>
</evidence>
<evidence type="ECO:0000250" key="3">
    <source>
        <dbReference type="UniProtKB" id="Q04771"/>
    </source>
</evidence>
<evidence type="ECO:0000250" key="4">
    <source>
        <dbReference type="UniProtKB" id="Q8K348"/>
    </source>
</evidence>
<evidence type="ECO:0000255" key="5"/>
<evidence type="ECO:0000255" key="6">
    <source>
        <dbReference type="PROSITE-ProRule" id="PRU00159"/>
    </source>
</evidence>
<evidence type="ECO:0000255" key="7">
    <source>
        <dbReference type="PROSITE-ProRule" id="PRU00585"/>
    </source>
</evidence>
<evidence type="ECO:0000255" key="8">
    <source>
        <dbReference type="PROSITE-ProRule" id="PRU10027"/>
    </source>
</evidence>
<evidence type="ECO:0000269" key="9">
    <source>
    </source>
</evidence>
<evidence type="ECO:0000269" key="10">
    <source>
    </source>
</evidence>
<evidence type="ECO:0000269" key="11">
    <source>
    </source>
</evidence>
<evidence type="ECO:0000269" key="12">
    <source>
    </source>
</evidence>
<evidence type="ECO:0000269" key="13">
    <source>
    </source>
</evidence>
<evidence type="ECO:0000303" key="14">
    <source>
    </source>
</evidence>
<evidence type="ECO:0000305" key="15"/>
<evidence type="ECO:0000312" key="16">
    <source>
        <dbReference type="EMBL" id="AAH22530.1"/>
    </source>
</evidence>
<evidence type="ECO:0000312" key="17">
    <source>
        <dbReference type="EMBL" id="AAM93495.1"/>
    </source>
</evidence>
<evidence type="ECO:0000312" key="18">
    <source>
        <dbReference type="EMBL" id="AAP21994.1"/>
    </source>
</evidence>
<evidence type="ECO:0000312" key="19">
    <source>
        <dbReference type="EMBL" id="AAX88951.1"/>
    </source>
</evidence>
<evidence type="ECO:0000312" key="20">
    <source>
        <dbReference type="HGNC" id="HGNC:18123"/>
    </source>
</evidence>
<keyword id="KW-0025">Alternative splicing</keyword>
<keyword id="KW-0053">Apoptosis</keyword>
<keyword id="KW-0067">ATP-binding</keyword>
<keyword id="KW-0418">Kinase</keyword>
<keyword id="KW-0460">Magnesium</keyword>
<keyword id="KW-0464">Manganese</keyword>
<keyword id="KW-0472">Membrane</keyword>
<keyword id="KW-0479">Metal-binding</keyword>
<keyword id="KW-0547">Nucleotide-binding</keyword>
<keyword id="KW-1267">Proteomics identification</keyword>
<keyword id="KW-0675">Receptor</keyword>
<keyword id="KW-1185">Reference proteome</keyword>
<keyword id="KW-0723">Serine/threonine-protein kinase</keyword>
<keyword id="KW-0732">Signal</keyword>
<keyword id="KW-0808">Transferase</keyword>
<keyword id="KW-0812">Transmembrane</keyword>
<keyword id="KW-1133">Transmembrane helix</keyword>
<proteinExistence type="evidence at protein level"/>
<sequence length="493" mass="54871">MTRALCSALRQALLLLAAAAELSPGLKCVCLLCDSSNFTCQTEGACWASVMLTNGKEQVIKSCVSLPELNAQVFCHSSNNVTKTECCFTDFCNNITLHLPTASPNAPKLGPMELAIIITVPVCLLSIAAMLTVWACQGRQCSYRKKKRPNVEEPLSECNLVNAGKTLKDLIYDVTASGSGSGLPLLVQRTIARTIVLQEIVGKGRFGEVWHGRWCGEDVAVKIFSSRDERSWFREAEIYQTVMLRHENILGFIAADNKDNGTWTQLWLVSEYHEQGSLYDYLNRNIVTVAGMIKLALSIASGLAHLHMEIVGTQGKPAIAHRDIKSKNILVKKCETCAIADLGLAVKHDSILNTIDIPQNPKVGTKRYMAPEMLDDTMNVNIFESFKRADIYSVGLVYWEIARRCSVGGIVEEYQLPYYDMVPSDPSIEEMRKVVCDQKFRPSIPNQWQSCEALRVMGRIMRECWYANGAARLTALRIKKTISQLCVKEDCKA</sequence>
<feature type="signal peptide" evidence="5">
    <location>
        <begin position="1"/>
        <end position="20"/>
    </location>
</feature>
<feature type="chain" id="PRO_0000042628" description="Activin receptor type-1C">
    <location>
        <begin position="21"/>
        <end position="493"/>
    </location>
</feature>
<feature type="topological domain" description="Extracellular" evidence="5">
    <location>
        <begin position="22"/>
        <end position="113"/>
    </location>
</feature>
<feature type="transmembrane region" description="Helical" evidence="5">
    <location>
        <begin position="114"/>
        <end position="134"/>
    </location>
</feature>
<feature type="topological domain" description="Cytoplasmic" evidence="5">
    <location>
        <begin position="135"/>
        <end position="493"/>
    </location>
</feature>
<feature type="domain" description="GS" evidence="7">
    <location>
        <begin position="165"/>
        <end position="194"/>
    </location>
</feature>
<feature type="domain" description="Protein kinase" evidence="6">
    <location>
        <begin position="195"/>
        <end position="485"/>
    </location>
</feature>
<feature type="active site" description="Proton acceptor" evidence="3 6 8">
    <location>
        <position position="323"/>
    </location>
</feature>
<feature type="binding site" evidence="3 6">
    <location>
        <begin position="201"/>
        <end position="209"/>
    </location>
    <ligand>
        <name>ATP</name>
        <dbReference type="ChEBI" id="CHEBI:30616"/>
    </ligand>
</feature>
<feature type="binding site" evidence="3 6">
    <location>
        <position position="222"/>
    </location>
    <ligand>
        <name>ATP</name>
        <dbReference type="ChEBI" id="CHEBI:30616"/>
    </ligand>
</feature>
<feature type="splice variant" id="VSP_051840" description="In isoform 4." evidence="14">
    <location>
        <begin position="1"/>
        <end position="50"/>
    </location>
</feature>
<feature type="splice variant" id="VSP_051841" description="In isoform 2." evidence="14">
    <location>
        <begin position="102"/>
        <end position="258"/>
    </location>
</feature>
<feature type="splice variant" id="VSP_051842" description="In isoform 3." evidence="14">
    <location>
        <begin position="102"/>
        <end position="181"/>
    </location>
</feature>
<feature type="sequence variant" id="VAR_041407" description="In dbSNP:rs56188432." evidence="13">
    <original>I</original>
    <variation>T</variation>
    <location>
        <position position="195"/>
    </location>
</feature>
<feature type="sequence variant" id="VAR_041408" description="In dbSNP:rs34742924." evidence="13">
    <original>G</original>
    <variation>R</variation>
    <location>
        <position position="216"/>
    </location>
</feature>
<feature type="sequence variant" id="VAR_041409" description="In a lung squamous cell carcinoma sample; somatic mutation." evidence="13">
    <original>W</original>
    <variation>R</variation>
    <location>
        <position position="267"/>
    </location>
</feature>
<feature type="sequence variant" id="VAR_041410" description="In dbSNP:rs35500979." evidence="13">
    <original>I</original>
    <variation>V</variation>
    <location>
        <position position="355"/>
    </location>
</feature>
<feature type="sequence variant" id="VAR_041411" description="In dbSNP:rs7594480." evidence="13">
    <original>I</original>
    <variation>V</variation>
    <location>
        <position position="482"/>
    </location>
</feature>
<feature type="mutagenesis site" description="Pro-apoptotic." evidence="12">
    <original>T</original>
    <variation>D</variation>
    <location>
        <position position="194"/>
    </location>
</feature>
<feature type="mutagenesis site" description="Loss of response to NODAL and SMAD2 phosphorylation." evidence="9 11 12">
    <original>K</original>
    <variation>R</variation>
    <location>
        <position position="222"/>
    </location>
</feature>
<feature type="sequence conflict" description="In Ref. 4; AAH22530." evidence="15" ref="4">
    <original>S</original>
    <variation>Y</variation>
    <location>
        <position position="231"/>
    </location>
</feature>
<feature type="sequence conflict" description="In Ref. 4; AAH22530." evidence="15" ref="4">
    <original>V</original>
    <variation>M</variation>
    <location>
        <position position="289"/>
    </location>
</feature>
<gene>
    <name evidence="20" type="primary">ACVR1C</name>
    <name evidence="14" type="synonym">ALK7</name>
</gene>
<protein>
    <recommendedName>
        <fullName>Activin receptor type-1C</fullName>
        <ecNumber>2.7.11.30</ecNumber>
    </recommendedName>
    <alternativeName>
        <fullName>Activin receptor type IC</fullName>
        <shortName>ACTR-IC</shortName>
    </alternativeName>
    <alternativeName>
        <fullName>Activin receptor-like kinase 7</fullName>
        <shortName>ALK-7</shortName>
    </alternativeName>
</protein>
<comment type="function">
    <text evidence="2 4 9 11 12">Serine/threonine protein kinase which forms a receptor complex on ligand binding. The receptor complex consists of 2 type II and 2 type I transmembrane serine/threonine kinases. Type II receptors phosphorylate and activate type I receptors which autophosphorylate, then bind and activate SMAD transcriptional regulators, SMAD2 and SMAD3. Receptor for activin AB, activin B, activin E and NODAL. Upon NODAL binding, activation results in increased apoptosis and reduced proliferation through suppression of AKT signaling and the activation of Smad2-dependent signaling pathway in pancreatic beta-cells, trophoblasts, epithelial or neuronal cells (PubMed:15531507, PubMed:15150278). Acts as a positive regulator for macrophage activation partially through down-regulation of PPARG expression (By similarity).</text>
</comment>
<comment type="catalytic activity">
    <reaction>
        <text>L-threonyl-[receptor-protein] + ATP = O-phospho-L-threonyl-[receptor-protein] + ADP + H(+)</text>
        <dbReference type="Rhea" id="RHEA:44880"/>
        <dbReference type="Rhea" id="RHEA-COMP:11024"/>
        <dbReference type="Rhea" id="RHEA-COMP:11025"/>
        <dbReference type="ChEBI" id="CHEBI:15378"/>
        <dbReference type="ChEBI" id="CHEBI:30013"/>
        <dbReference type="ChEBI" id="CHEBI:30616"/>
        <dbReference type="ChEBI" id="CHEBI:61977"/>
        <dbReference type="ChEBI" id="CHEBI:456216"/>
        <dbReference type="EC" id="2.7.11.30"/>
    </reaction>
</comment>
<comment type="catalytic activity">
    <reaction>
        <text>L-seryl-[receptor-protein] + ATP = O-phospho-L-seryl-[receptor-protein] + ADP + H(+)</text>
        <dbReference type="Rhea" id="RHEA:18673"/>
        <dbReference type="Rhea" id="RHEA-COMP:11022"/>
        <dbReference type="Rhea" id="RHEA-COMP:11023"/>
        <dbReference type="ChEBI" id="CHEBI:15378"/>
        <dbReference type="ChEBI" id="CHEBI:29999"/>
        <dbReference type="ChEBI" id="CHEBI:30616"/>
        <dbReference type="ChEBI" id="CHEBI:83421"/>
        <dbReference type="ChEBI" id="CHEBI:456216"/>
        <dbReference type="EC" id="2.7.11.30"/>
    </reaction>
</comment>
<comment type="cofactor">
    <cofactor evidence="15">
        <name>Mg(2+)</name>
        <dbReference type="ChEBI" id="CHEBI:18420"/>
    </cofactor>
    <cofactor evidence="15">
        <name>Mn(2+)</name>
        <dbReference type="ChEBI" id="CHEBI:29035"/>
    </cofactor>
</comment>
<comment type="subunit">
    <text evidence="1">Binds the type 2 receptor protein ACVR2A.</text>
</comment>
<comment type="subcellular location">
    <subcellularLocation>
        <location evidence="10">Membrane</location>
        <topology evidence="10">Single-pass type I membrane protein</topology>
    </subcellularLocation>
</comment>
<comment type="alternative products">
    <event type="alternative splicing"/>
    <isoform>
        <id>Q8NER5-1</id>
        <name evidence="10">1</name>
        <sequence type="displayed"/>
    </isoform>
    <isoform>
        <id>Q8NER5-2</id>
        <name evidence="10">2</name>
        <name evidence="14">B</name>
        <name evidence="14">soluble B</name>
        <sequence type="described" ref="VSP_051841"/>
    </isoform>
    <isoform>
        <id>Q8NER5-3</id>
        <name evidence="10">3</name>
        <name evidence="14">A</name>
        <name evidence="14">soluble A</name>
        <sequence type="described" ref="VSP_051842"/>
    </isoform>
    <isoform>
        <id>Q8NER5-4</id>
        <name evidence="10">4</name>
        <name evidence="14">Truncated</name>
        <sequence type="described" ref="VSP_051840"/>
    </isoform>
</comment>
<comment type="tissue specificity">
    <text evidence="9 10">Present in pancreas, heart, colon, small intestine, ovary and the hippocampus, medulla oblongata and putamen of the brain. Isoform 1, isoform 2, isoform 3 and isoform 4 are all expressed in the placenta throughout pregnancy.</text>
</comment>
<comment type="similarity">
    <text evidence="15">Belongs to the protein kinase superfamily. TKL Ser/Thr protein kinase family. TGFB receptor subfamily.</text>
</comment>
<name>ACV1C_HUMAN</name>
<dbReference type="EC" id="2.7.11.30"/>
<dbReference type="EMBL" id="AY127050">
    <property type="protein sequence ID" value="AAM93495.1"/>
    <property type="molecule type" value="mRNA"/>
</dbReference>
<dbReference type="EMBL" id="AF525679">
    <property type="protein sequence ID" value="AAP21993.1"/>
    <property type="molecule type" value="mRNA"/>
</dbReference>
<dbReference type="EMBL" id="AF525680">
    <property type="protein sequence ID" value="AAP21994.1"/>
    <property type="molecule type" value="mRNA"/>
</dbReference>
<dbReference type="EMBL" id="AF525681">
    <property type="protein sequence ID" value="AAP21995.1"/>
    <property type="molecule type" value="mRNA"/>
</dbReference>
<dbReference type="EMBL" id="AC019186">
    <property type="status" value="NOT_ANNOTATED_CDS"/>
    <property type="molecule type" value="Genomic_DNA"/>
</dbReference>
<dbReference type="EMBL" id="AC079750">
    <property type="protein sequence ID" value="AAX88951.1"/>
    <property type="molecule type" value="Genomic_DNA"/>
</dbReference>
<dbReference type="EMBL" id="BC022530">
    <property type="protein sequence ID" value="AAH22530.1"/>
    <property type="molecule type" value="mRNA"/>
</dbReference>
<dbReference type="CCDS" id="CCDS2205.1">
    <molecule id="Q8NER5-1"/>
</dbReference>
<dbReference type="CCDS" id="CCDS46432.1">
    <molecule id="Q8NER5-2"/>
</dbReference>
<dbReference type="CCDS" id="CCDS46433.1">
    <molecule id="Q8NER5-3"/>
</dbReference>
<dbReference type="CCDS" id="CCDS46434.1">
    <molecule id="Q8NER5-4"/>
</dbReference>
<dbReference type="RefSeq" id="NP_001104501.1">
    <molecule id="Q8NER5-4"/>
    <property type="nucleotide sequence ID" value="NM_001111031.2"/>
</dbReference>
<dbReference type="RefSeq" id="NP_001104502.1">
    <molecule id="Q8NER5-3"/>
    <property type="nucleotide sequence ID" value="NM_001111032.2"/>
</dbReference>
<dbReference type="RefSeq" id="NP_001104503.1">
    <molecule id="Q8NER5-2"/>
    <property type="nucleotide sequence ID" value="NM_001111033.2"/>
</dbReference>
<dbReference type="RefSeq" id="NP_660302.2">
    <molecule id="Q8NER5-1"/>
    <property type="nucleotide sequence ID" value="NM_145259.3"/>
</dbReference>
<dbReference type="SMR" id="Q8NER5"/>
<dbReference type="BioGRID" id="126232">
    <property type="interactions" value="21"/>
</dbReference>
<dbReference type="CORUM" id="Q8NER5"/>
<dbReference type="FunCoup" id="Q8NER5">
    <property type="interactions" value="744"/>
</dbReference>
<dbReference type="IntAct" id="Q8NER5">
    <property type="interactions" value="13"/>
</dbReference>
<dbReference type="STRING" id="9606.ENSP00000243349"/>
<dbReference type="ChEMBL" id="CHEMBL5642"/>
<dbReference type="iPTMnet" id="Q8NER5"/>
<dbReference type="PhosphoSitePlus" id="Q8NER5"/>
<dbReference type="BioMuta" id="ACVR1C"/>
<dbReference type="DMDM" id="74762565"/>
<dbReference type="jPOST" id="Q8NER5"/>
<dbReference type="MassIVE" id="Q8NER5"/>
<dbReference type="PaxDb" id="9606-ENSP00000243349"/>
<dbReference type="PeptideAtlas" id="Q8NER5"/>
<dbReference type="ProteomicsDB" id="73204">
    <molecule id="Q8NER5-1"/>
</dbReference>
<dbReference type="ProteomicsDB" id="73205">
    <molecule id="Q8NER5-2"/>
</dbReference>
<dbReference type="ProteomicsDB" id="73206">
    <molecule id="Q8NER5-3"/>
</dbReference>
<dbReference type="ProteomicsDB" id="73207">
    <molecule id="Q8NER5-4"/>
</dbReference>
<dbReference type="Antibodypedia" id="2075">
    <property type="antibodies" value="418 antibodies from 35 providers"/>
</dbReference>
<dbReference type="DNASU" id="130399"/>
<dbReference type="Ensembl" id="ENST00000243349.13">
    <molecule id="Q8NER5-1"/>
    <property type="protein sequence ID" value="ENSP00000243349.7"/>
    <property type="gene ID" value="ENSG00000123612.16"/>
</dbReference>
<dbReference type="Ensembl" id="ENST00000335450.7">
    <molecule id="Q8NER5-3"/>
    <property type="protein sequence ID" value="ENSP00000335178.7"/>
    <property type="gene ID" value="ENSG00000123612.16"/>
</dbReference>
<dbReference type="Ensembl" id="ENST00000348328.9">
    <molecule id="Q8NER5-2"/>
    <property type="protein sequence ID" value="ENSP00000335139.6"/>
    <property type="gene ID" value="ENSG00000123612.16"/>
</dbReference>
<dbReference type="Ensembl" id="ENST00000409680.7">
    <molecule id="Q8NER5-4"/>
    <property type="protein sequence ID" value="ENSP00000387168.3"/>
    <property type="gene ID" value="ENSG00000123612.16"/>
</dbReference>
<dbReference type="GeneID" id="130399"/>
<dbReference type="KEGG" id="hsa:130399"/>
<dbReference type="MANE-Select" id="ENST00000243349.13">
    <property type="protein sequence ID" value="ENSP00000243349.7"/>
    <property type="RefSeq nucleotide sequence ID" value="NM_145259.3"/>
    <property type="RefSeq protein sequence ID" value="NP_660302.2"/>
</dbReference>
<dbReference type="UCSC" id="uc002tzk.5">
    <molecule id="Q8NER5-1"/>
    <property type="organism name" value="human"/>
</dbReference>
<dbReference type="AGR" id="HGNC:18123"/>
<dbReference type="CTD" id="130399"/>
<dbReference type="DisGeNET" id="130399"/>
<dbReference type="GeneCards" id="ACVR1C"/>
<dbReference type="HGNC" id="HGNC:18123">
    <property type="gene designation" value="ACVR1C"/>
</dbReference>
<dbReference type="HPA" id="ENSG00000123612">
    <property type="expression patterns" value="Tissue enriched (adipose)"/>
</dbReference>
<dbReference type="MIM" id="608981">
    <property type="type" value="gene"/>
</dbReference>
<dbReference type="neXtProt" id="NX_Q8NER5"/>
<dbReference type="OpenTargets" id="ENSG00000123612"/>
<dbReference type="PharmGKB" id="PA134908988"/>
<dbReference type="VEuPathDB" id="HostDB:ENSG00000123612"/>
<dbReference type="eggNOG" id="KOG2052">
    <property type="taxonomic scope" value="Eukaryota"/>
</dbReference>
<dbReference type="GeneTree" id="ENSGT00940000158842"/>
<dbReference type="HOGENOM" id="CLU_000288_8_1_1"/>
<dbReference type="InParanoid" id="Q8NER5"/>
<dbReference type="OMA" id="TCQGRQC"/>
<dbReference type="OrthoDB" id="69842at2759"/>
<dbReference type="PAN-GO" id="Q8NER5">
    <property type="GO annotations" value="7 GO annotations based on evolutionary models"/>
</dbReference>
<dbReference type="PhylomeDB" id="Q8NER5"/>
<dbReference type="TreeFam" id="TF314724"/>
<dbReference type="BRENDA" id="2.7.11.30">
    <property type="organism ID" value="2681"/>
</dbReference>
<dbReference type="PathwayCommons" id="Q8NER5"/>
<dbReference type="Reactome" id="R-HSA-1181150">
    <property type="pathway name" value="Signaling by NODAL"/>
</dbReference>
<dbReference type="Reactome" id="R-HSA-1433617">
    <property type="pathway name" value="Regulation of signaling by NODAL"/>
</dbReference>
<dbReference type="Reactome" id="R-HSA-1502540">
    <property type="pathway name" value="Signaling by Activin"/>
</dbReference>
<dbReference type="SignaLink" id="Q8NER5"/>
<dbReference type="SIGNOR" id="Q8NER5"/>
<dbReference type="BioGRID-ORCS" id="130399">
    <property type="hits" value="8 hits in 1185 CRISPR screens"/>
</dbReference>
<dbReference type="ChiTaRS" id="ACVR1C">
    <property type="organism name" value="human"/>
</dbReference>
<dbReference type="GeneWiki" id="ACVR1C"/>
<dbReference type="GenomeRNAi" id="130399"/>
<dbReference type="Pharos" id="Q8NER5">
    <property type="development level" value="Tbio"/>
</dbReference>
<dbReference type="PRO" id="PR:Q8NER5"/>
<dbReference type="Proteomes" id="UP000005640">
    <property type="component" value="Chromosome 2"/>
</dbReference>
<dbReference type="RNAct" id="Q8NER5">
    <property type="molecule type" value="protein"/>
</dbReference>
<dbReference type="Bgee" id="ENSG00000123612">
    <property type="expression patterns" value="Expressed in jejunal mucosa and 130 other cell types or tissues"/>
</dbReference>
<dbReference type="GO" id="GO:0048179">
    <property type="term" value="C:activin receptor complex"/>
    <property type="evidence" value="ECO:0000314"/>
    <property type="project" value="UniProtKB"/>
</dbReference>
<dbReference type="GO" id="GO:0005886">
    <property type="term" value="C:plasma membrane"/>
    <property type="evidence" value="ECO:0000318"/>
    <property type="project" value="GO_Central"/>
</dbReference>
<dbReference type="GO" id="GO:0017002">
    <property type="term" value="F:activin receptor activity"/>
    <property type="evidence" value="ECO:0000314"/>
    <property type="project" value="ARUK-UCL"/>
</dbReference>
<dbReference type="GO" id="GO:0016361">
    <property type="term" value="F:activin receptor activity, type I"/>
    <property type="evidence" value="ECO:0000314"/>
    <property type="project" value="UniProtKB"/>
</dbReference>
<dbReference type="GO" id="GO:0005524">
    <property type="term" value="F:ATP binding"/>
    <property type="evidence" value="ECO:0007669"/>
    <property type="project" value="UniProtKB-KW"/>
</dbReference>
<dbReference type="GO" id="GO:0019838">
    <property type="term" value="F:growth factor binding"/>
    <property type="evidence" value="ECO:0000353"/>
    <property type="project" value="UniProtKB"/>
</dbReference>
<dbReference type="GO" id="GO:0046872">
    <property type="term" value="F:metal ion binding"/>
    <property type="evidence" value="ECO:0000305"/>
    <property type="project" value="UniProtKB"/>
</dbReference>
<dbReference type="GO" id="GO:0038100">
    <property type="term" value="F:nodal binding"/>
    <property type="evidence" value="ECO:0000315"/>
    <property type="project" value="BHF-UCL"/>
</dbReference>
<dbReference type="GO" id="GO:0004674">
    <property type="term" value="F:protein serine/threonine kinase activity"/>
    <property type="evidence" value="ECO:0000304"/>
    <property type="project" value="Reactome"/>
</dbReference>
<dbReference type="GO" id="GO:0032924">
    <property type="term" value="P:activin receptor signaling pathway"/>
    <property type="evidence" value="ECO:0000318"/>
    <property type="project" value="GO_Central"/>
</dbReference>
<dbReference type="GO" id="GO:0030262">
    <property type="term" value="P:apoptotic nuclear changes"/>
    <property type="evidence" value="ECO:0000314"/>
    <property type="project" value="UniProtKB"/>
</dbReference>
<dbReference type="GO" id="GO:0097190">
    <property type="term" value="P:apoptotic signaling pathway"/>
    <property type="evidence" value="ECO:0000315"/>
    <property type="project" value="BHF-UCL"/>
</dbReference>
<dbReference type="GO" id="GO:0030154">
    <property type="term" value="P:cell differentiation"/>
    <property type="evidence" value="ECO:0000314"/>
    <property type="project" value="UniProtKB"/>
</dbReference>
<dbReference type="GO" id="GO:0071363">
    <property type="term" value="P:cellular response to growth factor stimulus"/>
    <property type="evidence" value="ECO:0000318"/>
    <property type="project" value="GO_Central"/>
</dbReference>
<dbReference type="GO" id="GO:0030073">
    <property type="term" value="P:insulin secretion"/>
    <property type="evidence" value="ECO:0007669"/>
    <property type="project" value="Ensembl"/>
</dbReference>
<dbReference type="GO" id="GO:0019915">
    <property type="term" value="P:lipid storage"/>
    <property type="evidence" value="ECO:0007669"/>
    <property type="project" value="Ensembl"/>
</dbReference>
<dbReference type="GO" id="GO:1901383">
    <property type="term" value="P:negative regulation of chorionic trophoblast cell proliferation"/>
    <property type="evidence" value="ECO:0000315"/>
    <property type="project" value="BHF-UCL"/>
</dbReference>
<dbReference type="GO" id="GO:0046676">
    <property type="term" value="P:negative regulation of insulin secretion"/>
    <property type="evidence" value="ECO:0007669"/>
    <property type="project" value="Ensembl"/>
</dbReference>
<dbReference type="GO" id="GO:1901164">
    <property type="term" value="P:negative regulation of trophoblast cell migration"/>
    <property type="evidence" value="ECO:0000314"/>
    <property type="project" value="BHF-UCL"/>
</dbReference>
<dbReference type="GO" id="GO:0007399">
    <property type="term" value="P:nervous system development"/>
    <property type="evidence" value="ECO:0000318"/>
    <property type="project" value="GO_Central"/>
</dbReference>
<dbReference type="GO" id="GO:0038092">
    <property type="term" value="P:nodal signaling pathway"/>
    <property type="evidence" value="ECO:0000315"/>
    <property type="project" value="BHF-UCL"/>
</dbReference>
<dbReference type="GO" id="GO:0043065">
    <property type="term" value="P:positive regulation of apoptotic process"/>
    <property type="evidence" value="ECO:0000314"/>
    <property type="project" value="MGI"/>
</dbReference>
<dbReference type="GO" id="GO:0006468">
    <property type="term" value="P:protein phosphorylation"/>
    <property type="evidence" value="ECO:0000305"/>
    <property type="project" value="UniProtKB"/>
</dbReference>
<dbReference type="GO" id="GO:0002021">
    <property type="term" value="P:response to dietary excess"/>
    <property type="evidence" value="ECO:0007669"/>
    <property type="project" value="Ensembl"/>
</dbReference>
<dbReference type="GO" id="GO:0009749">
    <property type="term" value="P:response to glucose"/>
    <property type="evidence" value="ECO:0007669"/>
    <property type="project" value="Ensembl"/>
</dbReference>
<dbReference type="GO" id="GO:0032868">
    <property type="term" value="P:response to insulin"/>
    <property type="evidence" value="ECO:0007669"/>
    <property type="project" value="Ensembl"/>
</dbReference>
<dbReference type="GO" id="GO:0001834">
    <property type="term" value="P:trophectodermal cell proliferation"/>
    <property type="evidence" value="ECO:0000314"/>
    <property type="project" value="MGI"/>
</dbReference>
<dbReference type="CDD" id="cd14143">
    <property type="entry name" value="STKc_TGFbR1_ACVR1b_ACVR1c"/>
    <property type="match status" value="1"/>
</dbReference>
<dbReference type="CDD" id="cd23540">
    <property type="entry name" value="TFP_LU_ECD_ALK7"/>
    <property type="match status" value="1"/>
</dbReference>
<dbReference type="FunFam" id="1.10.510.10:FF:000045">
    <property type="entry name" value="Receptor protein serine/threonine kinase"/>
    <property type="match status" value="1"/>
</dbReference>
<dbReference type="FunFam" id="2.10.60.10:FF:000007">
    <property type="entry name" value="Receptor protein serine/threonine kinase"/>
    <property type="match status" value="1"/>
</dbReference>
<dbReference type="FunFam" id="3.30.200.20:FF:000023">
    <property type="entry name" value="Receptor protein serine/threonine kinase"/>
    <property type="match status" value="1"/>
</dbReference>
<dbReference type="Gene3D" id="2.10.60.10">
    <property type="entry name" value="CD59"/>
    <property type="match status" value="1"/>
</dbReference>
<dbReference type="Gene3D" id="3.30.200.20">
    <property type="entry name" value="Phosphorylase Kinase, domain 1"/>
    <property type="match status" value="1"/>
</dbReference>
<dbReference type="Gene3D" id="1.10.510.10">
    <property type="entry name" value="Transferase(Phosphotransferase) domain 1"/>
    <property type="match status" value="1"/>
</dbReference>
<dbReference type="InterPro" id="IPR000472">
    <property type="entry name" value="Activin_recp"/>
</dbReference>
<dbReference type="InterPro" id="IPR003605">
    <property type="entry name" value="GS_dom"/>
</dbReference>
<dbReference type="InterPro" id="IPR011009">
    <property type="entry name" value="Kinase-like_dom_sf"/>
</dbReference>
<dbReference type="InterPro" id="IPR000719">
    <property type="entry name" value="Prot_kinase_dom"/>
</dbReference>
<dbReference type="InterPro" id="IPR017441">
    <property type="entry name" value="Protein_kinase_ATP_BS"/>
</dbReference>
<dbReference type="InterPro" id="IPR001245">
    <property type="entry name" value="Ser-Thr/Tyr_kinase_cat_dom"/>
</dbReference>
<dbReference type="InterPro" id="IPR008271">
    <property type="entry name" value="Ser/Thr_kinase_AS"/>
</dbReference>
<dbReference type="InterPro" id="IPR045860">
    <property type="entry name" value="Snake_toxin-like_sf"/>
</dbReference>
<dbReference type="InterPro" id="IPR000333">
    <property type="entry name" value="TGFB_receptor"/>
</dbReference>
<dbReference type="PANTHER" id="PTHR23255:SF58">
    <property type="entry name" value="ACTIVIN RECEPTOR TYPE-1C"/>
    <property type="match status" value="1"/>
</dbReference>
<dbReference type="PANTHER" id="PTHR23255">
    <property type="entry name" value="TRANSFORMING GROWTH FACTOR-BETA RECEPTOR TYPE I AND II"/>
    <property type="match status" value="1"/>
</dbReference>
<dbReference type="Pfam" id="PF01064">
    <property type="entry name" value="Activin_recp"/>
    <property type="match status" value="1"/>
</dbReference>
<dbReference type="Pfam" id="PF07714">
    <property type="entry name" value="PK_Tyr_Ser-Thr"/>
    <property type="match status" value="1"/>
</dbReference>
<dbReference type="Pfam" id="PF08515">
    <property type="entry name" value="TGF_beta_GS"/>
    <property type="match status" value="1"/>
</dbReference>
<dbReference type="SMART" id="SM00467">
    <property type="entry name" value="GS"/>
    <property type="match status" value="1"/>
</dbReference>
<dbReference type="SMART" id="SM00220">
    <property type="entry name" value="S_TKc"/>
    <property type="match status" value="1"/>
</dbReference>
<dbReference type="SUPFAM" id="SSF56112">
    <property type="entry name" value="Protein kinase-like (PK-like)"/>
    <property type="match status" value="1"/>
</dbReference>
<dbReference type="SUPFAM" id="SSF57302">
    <property type="entry name" value="Snake toxin-like"/>
    <property type="match status" value="1"/>
</dbReference>
<dbReference type="PROSITE" id="PS51256">
    <property type="entry name" value="GS"/>
    <property type="match status" value="1"/>
</dbReference>
<dbReference type="PROSITE" id="PS00107">
    <property type="entry name" value="PROTEIN_KINASE_ATP"/>
    <property type="match status" value="1"/>
</dbReference>
<dbReference type="PROSITE" id="PS50011">
    <property type="entry name" value="PROTEIN_KINASE_DOM"/>
    <property type="match status" value="1"/>
</dbReference>
<dbReference type="PROSITE" id="PS00108">
    <property type="entry name" value="PROTEIN_KINASE_ST"/>
    <property type="match status" value="1"/>
</dbReference>